<keyword id="KW-0391">Immunity</keyword>
<keyword id="KW-0399">Innate immunity</keyword>
<keyword id="KW-1185">Reference proteome</keyword>
<keyword id="KW-0964">Secreted</keyword>
<keyword id="KW-0732">Signal</keyword>
<proteinExistence type="inferred from homology"/>
<protein>
    <recommendedName>
        <fullName>Protein Turandot Z</fullName>
    </recommendedName>
</protein>
<sequence>MSRLIHLSFVLALLACLTGPISANPIDDDRERLNQLLSNPEPADDAELLRNTQEAIALYKKHASRTLPGHQVELDLDRDIRAFETEHLTVDGLPIQGGVWDLIKRGADKVPDEVKDQAKELAKTTAKVLFNKLTEYLKKKISGEDAEKKDT</sequence>
<feature type="signal peptide" evidence="2">
    <location>
        <begin position="1"/>
        <end position="23"/>
    </location>
</feature>
<feature type="chain" id="PRO_0000355008" description="Protein Turandot Z">
    <location>
        <begin position="24"/>
        <end position="151"/>
    </location>
</feature>
<evidence type="ECO:0000250" key="1">
    <source>
        <dbReference type="UniProtKB" id="Q8IN41"/>
    </source>
</evidence>
<evidence type="ECO:0000255" key="2"/>
<evidence type="ECO:0000312" key="3">
    <source>
        <dbReference type="EMBL" id="EAL27756.1"/>
    </source>
</evidence>
<comment type="function">
    <text evidence="1">A humoral factor that may play a role in stress tolerance.</text>
</comment>
<comment type="subcellular location">
    <subcellularLocation>
        <location evidence="1">Secreted</location>
    </subcellularLocation>
</comment>
<comment type="similarity">
    <text evidence="2">Belongs to the Turandot family.</text>
</comment>
<dbReference type="EMBL" id="CM000070">
    <property type="protein sequence ID" value="EAL27756.1"/>
    <property type="molecule type" value="Genomic_DNA"/>
</dbReference>
<dbReference type="RefSeq" id="XP_001358615.1">
    <property type="nucleotide sequence ID" value="XM_001358578.2"/>
</dbReference>
<dbReference type="SMR" id="Q299E7"/>
<dbReference type="FunCoup" id="Q299E7">
    <property type="interactions" value="14"/>
</dbReference>
<dbReference type="EnsemblMetazoa" id="FBtr0285421">
    <property type="protein sequence ID" value="FBpp0283859"/>
    <property type="gene ID" value="FBgn0076303"/>
</dbReference>
<dbReference type="GeneID" id="4801541"/>
<dbReference type="KEGG" id="dpo:4801541"/>
<dbReference type="CTD" id="117459"/>
<dbReference type="HOGENOM" id="CLU_1733395_0_0_1"/>
<dbReference type="InParanoid" id="Q299E7"/>
<dbReference type="OMA" id="PIQGGVW"/>
<dbReference type="PhylomeDB" id="Q299E7"/>
<dbReference type="Proteomes" id="UP000001819">
    <property type="component" value="Chromosome 2"/>
</dbReference>
<dbReference type="Bgee" id="FBgn0076303">
    <property type="expression patterns" value="Expressed in insect adult head"/>
</dbReference>
<dbReference type="GO" id="GO:0005615">
    <property type="term" value="C:extracellular space"/>
    <property type="evidence" value="ECO:0000250"/>
    <property type="project" value="UniProtKB"/>
</dbReference>
<dbReference type="GO" id="GO:0034605">
    <property type="term" value="P:cellular response to heat"/>
    <property type="evidence" value="ECO:0007669"/>
    <property type="project" value="UniProtKB-ARBA"/>
</dbReference>
<dbReference type="GO" id="GO:0045087">
    <property type="term" value="P:innate immune response"/>
    <property type="evidence" value="ECO:0007669"/>
    <property type="project" value="UniProtKB-KW"/>
</dbReference>
<dbReference type="GO" id="GO:0009617">
    <property type="term" value="P:response to bacterium"/>
    <property type="evidence" value="ECO:0007669"/>
    <property type="project" value="UniProtKB-ARBA"/>
</dbReference>
<dbReference type="GO" id="GO:0009408">
    <property type="term" value="P:response to heat"/>
    <property type="evidence" value="ECO:0000250"/>
    <property type="project" value="UniProtKB"/>
</dbReference>
<dbReference type="GO" id="GO:0006979">
    <property type="term" value="P:response to oxidative stress"/>
    <property type="evidence" value="ECO:0000250"/>
    <property type="project" value="UniProtKB"/>
</dbReference>
<dbReference type="GO" id="GO:0009411">
    <property type="term" value="P:response to UV"/>
    <property type="evidence" value="ECO:0000250"/>
    <property type="project" value="UniProtKB"/>
</dbReference>
<dbReference type="InterPro" id="IPR010825">
    <property type="entry name" value="Turandot"/>
</dbReference>
<dbReference type="Pfam" id="PF07240">
    <property type="entry name" value="Turandot"/>
    <property type="match status" value="1"/>
</dbReference>
<name>TOTZ_DROPS</name>
<gene>
    <name evidence="3" type="primary">TotZ</name>
    <name type="ORF">GA16287</name>
</gene>
<organism>
    <name type="scientific">Drosophila pseudoobscura pseudoobscura</name>
    <name type="common">Fruit fly</name>
    <dbReference type="NCBI Taxonomy" id="46245"/>
    <lineage>
        <taxon>Eukaryota</taxon>
        <taxon>Metazoa</taxon>
        <taxon>Ecdysozoa</taxon>
        <taxon>Arthropoda</taxon>
        <taxon>Hexapoda</taxon>
        <taxon>Insecta</taxon>
        <taxon>Pterygota</taxon>
        <taxon>Neoptera</taxon>
        <taxon>Endopterygota</taxon>
        <taxon>Diptera</taxon>
        <taxon>Brachycera</taxon>
        <taxon>Muscomorpha</taxon>
        <taxon>Ephydroidea</taxon>
        <taxon>Drosophilidae</taxon>
        <taxon>Drosophila</taxon>
        <taxon>Sophophora</taxon>
    </lineage>
</organism>
<accession>Q299E7</accession>
<reference evidence="3" key="1">
    <citation type="journal article" date="2005" name="Genome Res.">
        <title>Comparative genome sequencing of Drosophila pseudoobscura: chromosomal, gene, and cis-element evolution.</title>
        <authorList>
            <person name="Richards S."/>
            <person name="Liu Y."/>
            <person name="Bettencourt B.R."/>
            <person name="Hradecky P."/>
            <person name="Letovsky S."/>
            <person name="Nielsen R."/>
            <person name="Thornton K."/>
            <person name="Hubisz M.J."/>
            <person name="Chen R."/>
            <person name="Meisel R.P."/>
            <person name="Couronne O."/>
            <person name="Hua S."/>
            <person name="Smith M.A."/>
            <person name="Zhang P."/>
            <person name="Liu J."/>
            <person name="Bussemaker H.J."/>
            <person name="van Batenburg M.F."/>
            <person name="Howells S.L."/>
            <person name="Scherer S.E."/>
            <person name="Sodergren E."/>
            <person name="Matthews B.B."/>
            <person name="Crosby M.A."/>
            <person name="Schroeder A.J."/>
            <person name="Ortiz-Barrientos D."/>
            <person name="Rives C.M."/>
            <person name="Metzker M.L."/>
            <person name="Muzny D.M."/>
            <person name="Scott G."/>
            <person name="Steffen D."/>
            <person name="Wheeler D.A."/>
            <person name="Worley K.C."/>
            <person name="Havlak P."/>
            <person name="Durbin K.J."/>
            <person name="Egan A."/>
            <person name="Gill R."/>
            <person name="Hume J."/>
            <person name="Morgan M.B."/>
            <person name="Miner G."/>
            <person name="Hamilton C."/>
            <person name="Huang Y."/>
            <person name="Waldron L."/>
            <person name="Verduzco D."/>
            <person name="Clerc-Blankenburg K.P."/>
            <person name="Dubchak I."/>
            <person name="Noor M.A.F."/>
            <person name="Anderson W."/>
            <person name="White K.P."/>
            <person name="Clark A.G."/>
            <person name="Schaeffer S.W."/>
            <person name="Gelbart W.M."/>
            <person name="Weinstock G.M."/>
            <person name="Gibbs R.A."/>
        </authorList>
    </citation>
    <scope>NUCLEOTIDE SEQUENCE [LARGE SCALE GENOMIC DNA]</scope>
    <source>
        <strain>MV2-25 / Tucson 14011-0121.94</strain>
    </source>
</reference>